<keyword id="KW-0010">Activator</keyword>
<keyword id="KW-0238">DNA-binding</keyword>
<keyword id="KW-1185">Reference proteome</keyword>
<keyword id="KW-0804">Transcription</keyword>
<keyword id="KW-0805">Transcription regulation</keyword>
<organism>
    <name type="scientific">Escherichia coli O127:H6 (strain E2348/69 / EPEC)</name>
    <dbReference type="NCBI Taxonomy" id="574521"/>
    <lineage>
        <taxon>Bacteria</taxon>
        <taxon>Pseudomonadati</taxon>
        <taxon>Pseudomonadota</taxon>
        <taxon>Gammaproteobacteria</taxon>
        <taxon>Enterobacterales</taxon>
        <taxon>Enterobacteriaceae</taxon>
        <taxon>Escherichia</taxon>
    </lineage>
</organism>
<dbReference type="EMBL" id="FM180568">
    <property type="protein sequence ID" value="CAS11079.1"/>
    <property type="molecule type" value="Genomic_DNA"/>
</dbReference>
<dbReference type="RefSeq" id="WP_000462905.1">
    <property type="nucleotide sequence ID" value="NC_011601.1"/>
</dbReference>
<dbReference type="SMR" id="B7UJZ2"/>
<dbReference type="GeneID" id="98390389"/>
<dbReference type="KEGG" id="ecg:E2348C_3531"/>
<dbReference type="HOGENOM" id="CLU_158040_3_0_6"/>
<dbReference type="Proteomes" id="UP000008205">
    <property type="component" value="Chromosome"/>
</dbReference>
<dbReference type="GO" id="GO:0003700">
    <property type="term" value="F:DNA-binding transcription factor activity"/>
    <property type="evidence" value="ECO:0007669"/>
    <property type="project" value="UniProtKB-UniRule"/>
</dbReference>
<dbReference type="GO" id="GO:0043565">
    <property type="term" value="F:sequence-specific DNA binding"/>
    <property type="evidence" value="ECO:0007669"/>
    <property type="project" value="InterPro"/>
</dbReference>
<dbReference type="FunFam" id="1.10.10.60:FF:000006">
    <property type="entry name" value="DNA-binding protein Fis"/>
    <property type="match status" value="1"/>
</dbReference>
<dbReference type="Gene3D" id="1.10.10.60">
    <property type="entry name" value="Homeodomain-like"/>
    <property type="match status" value="1"/>
</dbReference>
<dbReference type="HAMAP" id="MF_00166">
    <property type="entry name" value="DNA_binding_Fis"/>
    <property type="match status" value="1"/>
</dbReference>
<dbReference type="InterPro" id="IPR005412">
    <property type="entry name" value="Fis_DNA-bd"/>
</dbReference>
<dbReference type="InterPro" id="IPR009057">
    <property type="entry name" value="Homeodomain-like_sf"/>
</dbReference>
<dbReference type="InterPro" id="IPR002197">
    <property type="entry name" value="HTH_Fis"/>
</dbReference>
<dbReference type="InterPro" id="IPR050207">
    <property type="entry name" value="Trans_regulatory_Fis"/>
</dbReference>
<dbReference type="NCBIfam" id="NF001659">
    <property type="entry name" value="PRK00430.1"/>
    <property type="match status" value="1"/>
</dbReference>
<dbReference type="PANTHER" id="PTHR47918">
    <property type="entry name" value="DNA-BINDING PROTEIN FIS"/>
    <property type="match status" value="1"/>
</dbReference>
<dbReference type="PANTHER" id="PTHR47918:SF1">
    <property type="entry name" value="DNA-BINDING PROTEIN FIS"/>
    <property type="match status" value="1"/>
</dbReference>
<dbReference type="Pfam" id="PF02954">
    <property type="entry name" value="HTH_8"/>
    <property type="match status" value="1"/>
</dbReference>
<dbReference type="PIRSF" id="PIRSF002097">
    <property type="entry name" value="DNA-binding_Fis"/>
    <property type="match status" value="1"/>
</dbReference>
<dbReference type="PRINTS" id="PR01591">
    <property type="entry name" value="DNABINDNGFIS"/>
</dbReference>
<dbReference type="PRINTS" id="PR01590">
    <property type="entry name" value="HTHFIS"/>
</dbReference>
<dbReference type="SUPFAM" id="SSF46689">
    <property type="entry name" value="Homeodomain-like"/>
    <property type="match status" value="1"/>
</dbReference>
<sequence length="98" mass="11240">MFEQRVNSDVLTVSTVNSQDQVTQKPLRDSVKQALKNYFAQLNGQDVNDLYELVLAEVEQPLLDMVMQYTRGNQTRAALMMGINRGTLRKKLKKYGMN</sequence>
<reference key="1">
    <citation type="journal article" date="2009" name="J. Bacteriol.">
        <title>Complete genome sequence and comparative genome analysis of enteropathogenic Escherichia coli O127:H6 strain E2348/69.</title>
        <authorList>
            <person name="Iguchi A."/>
            <person name="Thomson N.R."/>
            <person name="Ogura Y."/>
            <person name="Saunders D."/>
            <person name="Ooka T."/>
            <person name="Henderson I.R."/>
            <person name="Harris D."/>
            <person name="Asadulghani M."/>
            <person name="Kurokawa K."/>
            <person name="Dean P."/>
            <person name="Kenny B."/>
            <person name="Quail M.A."/>
            <person name="Thurston S."/>
            <person name="Dougan G."/>
            <person name="Hayashi T."/>
            <person name="Parkhill J."/>
            <person name="Frankel G."/>
        </authorList>
    </citation>
    <scope>NUCLEOTIDE SEQUENCE [LARGE SCALE GENOMIC DNA]</scope>
    <source>
        <strain>E2348/69 / EPEC</strain>
    </source>
</reference>
<evidence type="ECO:0000255" key="1">
    <source>
        <dbReference type="HAMAP-Rule" id="MF_00166"/>
    </source>
</evidence>
<protein>
    <recommendedName>
        <fullName evidence="1">DNA-binding protein Fis</fullName>
    </recommendedName>
</protein>
<proteinExistence type="inferred from homology"/>
<accession>B7UJZ2</accession>
<comment type="function">
    <text evidence="1">Activates ribosomal RNA transcription. Plays a direct role in upstream activation of rRNA promoters.</text>
</comment>
<comment type="subunit">
    <text evidence="1">Homodimer.</text>
</comment>
<comment type="similarity">
    <text evidence="1">Belongs to the transcriptional regulatory Fis family.</text>
</comment>
<name>FIS_ECO27</name>
<gene>
    <name evidence="1" type="primary">fis</name>
    <name type="ordered locus">E2348C_3531</name>
</gene>
<feature type="chain" id="PRO_1000123605" description="DNA-binding protein Fis">
    <location>
        <begin position="1"/>
        <end position="98"/>
    </location>
</feature>
<feature type="DNA-binding region" description="H-T-H motif" evidence="1">
    <location>
        <begin position="74"/>
        <end position="93"/>
    </location>
</feature>